<comment type="similarity">
    <text evidence="1">To E.cuniculi ECU03_0120.</text>
</comment>
<keyword id="KW-1185">Reference proteome</keyword>
<feature type="chain" id="PRO_0000223088" description="Uncharacterized protein ECU05_1600/ECU11_0130">
    <location>
        <begin position="1"/>
        <end position="291"/>
    </location>
</feature>
<reference key="1">
    <citation type="journal article" date="2001" name="Nature">
        <title>Genome sequence and gene compaction of the eukaryote parasite Encephalitozoon cuniculi.</title>
        <authorList>
            <person name="Katinka M.D."/>
            <person name="Duprat S."/>
            <person name="Cornillot E."/>
            <person name="Metenier G."/>
            <person name="Thomarat F."/>
            <person name="Prensier G."/>
            <person name="Barbe V."/>
            <person name="Peyretaillade E."/>
            <person name="Brottier P."/>
            <person name="Wincker P."/>
            <person name="Delbac F."/>
            <person name="El Alaoui H."/>
            <person name="Peyret P."/>
            <person name="Saurin W."/>
            <person name="Gouy M."/>
            <person name="Weissenbach J."/>
            <person name="Vivares C.P."/>
        </authorList>
    </citation>
    <scope>NUCLEOTIDE SEQUENCE [LARGE SCALE GENOMIC DNA]</scope>
    <source>
        <strain>GB-M1</strain>
    </source>
</reference>
<reference key="2">
    <citation type="journal article" date="2009" name="BMC Genomics">
        <title>Identification of transcriptional signals in Encephalitozoon cuniculi widespread among Microsporidia phylum: support for accurate structural genome annotation.</title>
        <authorList>
            <person name="Peyretaillade E."/>
            <person name="Goncalves O."/>
            <person name="Terrat S."/>
            <person name="Dugat-Bony E."/>
            <person name="Wincker P."/>
            <person name="Cornman R.S."/>
            <person name="Evans J.D."/>
            <person name="Delbac F."/>
            <person name="Peyret P."/>
        </authorList>
    </citation>
    <scope>GENOME REANNOTATION</scope>
    <source>
        <strain>GB-M1</strain>
    </source>
</reference>
<evidence type="ECO:0000305" key="1"/>
<dbReference type="EMBL" id="AL590445">
    <property type="protein sequence ID" value="CAD26680.2"/>
    <property type="molecule type" value="Genomic_DNA"/>
</dbReference>
<dbReference type="EMBL" id="AL590450">
    <property type="protein sequence ID" value="CAD25923.2"/>
    <property type="molecule type" value="Genomic_DNA"/>
</dbReference>
<dbReference type="RefSeq" id="NP_586319.1">
    <property type="nucleotide sequence ID" value="NM_001042152.1"/>
</dbReference>
<dbReference type="RefSeq" id="NP_597503.2">
    <property type="nucleotide sequence ID" value="NM_001041369.2"/>
</dbReference>
<dbReference type="GeneID" id="859170"/>
<dbReference type="GeneID" id="859970"/>
<dbReference type="KEGG" id="ecu:ECU05_1600"/>
<dbReference type="KEGG" id="ecu:ECU11_0130"/>
<dbReference type="VEuPathDB" id="MicrosporidiaDB:ECU05_1600"/>
<dbReference type="VEuPathDB" id="MicrosporidiaDB:ECU11_0130"/>
<dbReference type="HOGENOM" id="CLU_1008411_0_0_1"/>
<dbReference type="InParanoid" id="Q8STJ2"/>
<dbReference type="OrthoDB" id="2195135at2759"/>
<dbReference type="Proteomes" id="UP000000819">
    <property type="component" value="Chromosome V"/>
</dbReference>
<dbReference type="Proteomes" id="UP000000819">
    <property type="component" value="Chromosome XI"/>
</dbReference>
<organism>
    <name type="scientific">Encephalitozoon cuniculi (strain GB-M1)</name>
    <name type="common">Microsporidian parasite</name>
    <dbReference type="NCBI Taxonomy" id="284813"/>
    <lineage>
        <taxon>Eukaryota</taxon>
        <taxon>Fungi</taxon>
        <taxon>Fungi incertae sedis</taxon>
        <taxon>Microsporidia</taxon>
        <taxon>Unikaryonidae</taxon>
        <taxon>Encephalitozoon</taxon>
    </lineage>
</organism>
<protein>
    <recommendedName>
        <fullName>Uncharacterized protein ECU05_1600/ECU11_0130</fullName>
    </recommendedName>
</protein>
<sequence>MNTVVNISNEGKTEDLESVKRPVIYPEEEEKAEESESSIDIDALLILSTVTVWAFRLLFERALGNLFFYIVGWGNLGYLVYSTIRRLFLKSEESRDKGLDVSDIMAIMCLLLHLFMFTLLVCNSFVFSGSIGNIADVIIRNPLGILMASRNFLDSQQMMESQRAYYVSLTVVQMAFAIVLAVTFDYGNDAVAPLELLRALLLLMLVGTTFCYIEDVVIRNLKISKEKVKRFRLLAKMMLVIGCTTAGYYMMDRMFKLATTEMASTVPTPTAPRYPLASTVPPYTLLDGEYC</sequence>
<name>Y5G0_ENCCU</name>
<accession>Q8STJ2</accession>
<gene>
    <name type="ordered locus">ECU05_1600</name>
</gene>
<gene>
    <name type="ordered locus">ECU11_0130</name>
</gene>
<proteinExistence type="predicted"/>